<organism>
    <name type="scientific">Clostridioides difficile (strain 630)</name>
    <name type="common">Peptoclostridium difficile</name>
    <dbReference type="NCBI Taxonomy" id="272563"/>
    <lineage>
        <taxon>Bacteria</taxon>
        <taxon>Bacillati</taxon>
        <taxon>Bacillota</taxon>
        <taxon>Clostridia</taxon>
        <taxon>Peptostreptococcales</taxon>
        <taxon>Peptostreptococcaceae</taxon>
        <taxon>Clostridioides</taxon>
    </lineage>
</organism>
<reference key="1">
    <citation type="journal article" date="2006" name="Nat. Genet.">
        <title>The multidrug-resistant human pathogen Clostridium difficile has a highly mobile, mosaic genome.</title>
        <authorList>
            <person name="Sebaihia M."/>
            <person name="Wren B.W."/>
            <person name="Mullany P."/>
            <person name="Fairweather N.F."/>
            <person name="Minton N."/>
            <person name="Stabler R."/>
            <person name="Thomson N.R."/>
            <person name="Roberts A.P."/>
            <person name="Cerdeno-Tarraga A.M."/>
            <person name="Wang H."/>
            <person name="Holden M.T.G."/>
            <person name="Wright A."/>
            <person name="Churcher C."/>
            <person name="Quail M.A."/>
            <person name="Baker S."/>
            <person name="Bason N."/>
            <person name="Brooks K."/>
            <person name="Chillingworth T."/>
            <person name="Cronin A."/>
            <person name="Davis P."/>
            <person name="Dowd L."/>
            <person name="Fraser A."/>
            <person name="Feltwell T."/>
            <person name="Hance Z."/>
            <person name="Holroyd S."/>
            <person name="Jagels K."/>
            <person name="Moule S."/>
            <person name="Mungall K."/>
            <person name="Price C."/>
            <person name="Rabbinowitsch E."/>
            <person name="Sharp S."/>
            <person name="Simmonds M."/>
            <person name="Stevens K."/>
            <person name="Unwin L."/>
            <person name="Whithead S."/>
            <person name="Dupuy B."/>
            <person name="Dougan G."/>
            <person name="Barrell B."/>
            <person name="Parkhill J."/>
        </authorList>
    </citation>
    <scope>NUCLEOTIDE SEQUENCE [LARGE SCALE GENOMIC DNA]</scope>
    <source>
        <strain>630</strain>
    </source>
</reference>
<evidence type="ECO:0000255" key="1">
    <source>
        <dbReference type="HAMAP-Rule" id="MF_00310"/>
    </source>
</evidence>
<accession>Q184E3</accession>
<comment type="function">
    <text evidence="1">Produces ATP from ADP in the presence of a proton gradient across the membrane. The V-type beta chain is a regulatory subunit.</text>
</comment>
<comment type="similarity">
    <text evidence="1">Belongs to the ATPase alpha/beta chains family.</text>
</comment>
<name>VATB_CLOD6</name>
<feature type="chain" id="PRO_0000322489" description="V-type ATP synthase beta chain">
    <location>
        <begin position="1"/>
        <end position="457"/>
    </location>
</feature>
<gene>
    <name evidence="1" type="primary">atpB</name>
    <name type="ordered locus">CD630_29550</name>
</gene>
<proteinExistence type="inferred from homology"/>
<protein>
    <recommendedName>
        <fullName evidence="1">V-type ATP synthase beta chain</fullName>
    </recommendedName>
    <alternativeName>
        <fullName evidence="1">V-ATPase subunit B</fullName>
    </alternativeName>
</protein>
<dbReference type="EMBL" id="AM180355">
    <property type="protein sequence ID" value="CAJ69847.1"/>
    <property type="molecule type" value="Genomic_DNA"/>
</dbReference>
<dbReference type="RefSeq" id="WP_003422669.1">
    <property type="nucleotide sequence ID" value="NZ_JAUPES010000017.1"/>
</dbReference>
<dbReference type="RefSeq" id="YP_001089471.1">
    <property type="nucleotide sequence ID" value="NC_009089.1"/>
</dbReference>
<dbReference type="SMR" id="Q184E3"/>
<dbReference type="STRING" id="272563.CD630_29550"/>
<dbReference type="EnsemblBacteria" id="CAJ69847">
    <property type="protein sequence ID" value="CAJ69847"/>
    <property type="gene ID" value="CD630_29550"/>
</dbReference>
<dbReference type="KEGG" id="cdf:CD630_29550"/>
<dbReference type="KEGG" id="pdc:CDIF630_03238"/>
<dbReference type="PATRIC" id="fig|272563.120.peg.3121"/>
<dbReference type="eggNOG" id="COG1156">
    <property type="taxonomic scope" value="Bacteria"/>
</dbReference>
<dbReference type="OrthoDB" id="9802718at2"/>
<dbReference type="PhylomeDB" id="Q184E3"/>
<dbReference type="BioCyc" id="PDIF272563:G12WB-3119-MONOMER"/>
<dbReference type="Proteomes" id="UP000001978">
    <property type="component" value="Chromosome"/>
</dbReference>
<dbReference type="GO" id="GO:0005524">
    <property type="term" value="F:ATP binding"/>
    <property type="evidence" value="ECO:0007669"/>
    <property type="project" value="UniProtKB-UniRule"/>
</dbReference>
<dbReference type="GO" id="GO:0046933">
    <property type="term" value="F:proton-transporting ATP synthase activity, rotational mechanism"/>
    <property type="evidence" value="ECO:0007669"/>
    <property type="project" value="UniProtKB-UniRule"/>
</dbReference>
<dbReference type="GO" id="GO:0042777">
    <property type="term" value="P:proton motive force-driven plasma membrane ATP synthesis"/>
    <property type="evidence" value="ECO:0007669"/>
    <property type="project" value="UniProtKB-UniRule"/>
</dbReference>
<dbReference type="CDD" id="cd18112">
    <property type="entry name" value="ATP-synt_V_A-type_beta_C"/>
    <property type="match status" value="1"/>
</dbReference>
<dbReference type="CDD" id="cd18118">
    <property type="entry name" value="ATP-synt_V_A-type_beta_N"/>
    <property type="match status" value="1"/>
</dbReference>
<dbReference type="CDD" id="cd01135">
    <property type="entry name" value="V_A-ATPase_B"/>
    <property type="match status" value="1"/>
</dbReference>
<dbReference type="Gene3D" id="3.40.50.12240">
    <property type="match status" value="1"/>
</dbReference>
<dbReference type="HAMAP" id="MF_00310">
    <property type="entry name" value="ATP_synth_B_arch"/>
    <property type="match status" value="1"/>
</dbReference>
<dbReference type="InterPro" id="IPR055190">
    <property type="entry name" value="ATP-synt_VA_C"/>
</dbReference>
<dbReference type="InterPro" id="IPR020003">
    <property type="entry name" value="ATPase_a/bsu_AS"/>
</dbReference>
<dbReference type="InterPro" id="IPR004100">
    <property type="entry name" value="ATPase_F1/V1/A1_a/bsu_N"/>
</dbReference>
<dbReference type="InterPro" id="IPR000194">
    <property type="entry name" value="ATPase_F1/V1/A1_a/bsu_nucl-bd"/>
</dbReference>
<dbReference type="InterPro" id="IPR027417">
    <property type="entry name" value="P-loop_NTPase"/>
</dbReference>
<dbReference type="InterPro" id="IPR022879">
    <property type="entry name" value="V-ATPase_su_B/beta"/>
</dbReference>
<dbReference type="NCBIfam" id="NF003235">
    <property type="entry name" value="PRK04196.1"/>
    <property type="match status" value="1"/>
</dbReference>
<dbReference type="PANTHER" id="PTHR43389">
    <property type="entry name" value="V-TYPE PROTON ATPASE SUBUNIT B"/>
    <property type="match status" value="1"/>
</dbReference>
<dbReference type="PANTHER" id="PTHR43389:SF4">
    <property type="entry name" value="V-TYPE PROTON ATPASE SUBUNIT B"/>
    <property type="match status" value="1"/>
</dbReference>
<dbReference type="Pfam" id="PF00006">
    <property type="entry name" value="ATP-synt_ab"/>
    <property type="match status" value="1"/>
</dbReference>
<dbReference type="Pfam" id="PF02874">
    <property type="entry name" value="ATP-synt_ab_N"/>
    <property type="match status" value="1"/>
</dbReference>
<dbReference type="Pfam" id="PF22919">
    <property type="entry name" value="ATP-synt_VA_C"/>
    <property type="match status" value="1"/>
</dbReference>
<dbReference type="PIRSF" id="PIRSF039114">
    <property type="entry name" value="V-ATPsynth_beta/V-ATPase_B"/>
    <property type="match status" value="1"/>
</dbReference>
<dbReference type="SUPFAM" id="SSF47917">
    <property type="entry name" value="C-terminal domain of alpha and beta subunits of F1 ATP synthase"/>
    <property type="match status" value="1"/>
</dbReference>
<dbReference type="SUPFAM" id="SSF52540">
    <property type="entry name" value="P-loop containing nucleoside triphosphate hydrolases"/>
    <property type="match status" value="1"/>
</dbReference>
<dbReference type="PROSITE" id="PS00152">
    <property type="entry name" value="ATPASE_ALPHA_BETA"/>
    <property type="match status" value="1"/>
</dbReference>
<keyword id="KW-0066">ATP synthesis</keyword>
<keyword id="KW-0375">Hydrogen ion transport</keyword>
<keyword id="KW-0406">Ion transport</keyword>
<keyword id="KW-1185">Reference proteome</keyword>
<keyword id="KW-0813">Transport</keyword>
<sequence length="457" mass="50560">MIKEYKSIQEVAGPLMLINGVEGVKFDELGEIELSNGEIRRCKVLEVNGDTALVQLFESSTGINLAESKVRFLGKSLDFGVSPDILGRVFSGMGRPIDGGPEIIPDKRLDINGAPINPAARDYPAEFIQTGVSAIDGLNTLVRGQKLPIFSGSGLPHANLAVQIARQAKVRGTDSKFAVVFAAVGITFEDAEFFISDFKATGAIDRSVVFVNLANDPAVERVSTPRMALTAAEYLAFEQDMHVLVIITDITNYAEALREVSAAKKEVPGRRGYPGYLYTDLATMYERAGKMKGHEGSITMIPILTMPEDDKTHPIPDLTGYITEGQIILSRELYKKDIQPPIDVLPSLSRLKDKGIGKGKTREDHADTMNQLFAAYSRGKDAKELMAILGESALSEIDLMYAKFADEFEKEYVSQGFRTDRTIEQTLEIGWKLLSMLPKSELKRIRDEYFEKYMPKE</sequence>